<reference key="1">
    <citation type="journal article" date="2011" name="J. Bacteriol.">
        <title>Complete genome sequence of the plant growth-promoting endophyte Burkholderia phytofirmans strain PsJN.</title>
        <authorList>
            <person name="Weilharter A."/>
            <person name="Mitter B."/>
            <person name="Shin M.V."/>
            <person name="Chain P.S."/>
            <person name="Nowak J."/>
            <person name="Sessitsch A."/>
        </authorList>
    </citation>
    <scope>NUCLEOTIDE SEQUENCE [LARGE SCALE GENOMIC DNA]</scope>
    <source>
        <strain>DSM 17436 / LMG 22146 / PsJN</strain>
    </source>
</reference>
<dbReference type="EMBL" id="CP001052">
    <property type="protein sequence ID" value="ACD16851.1"/>
    <property type="molecule type" value="Genomic_DNA"/>
</dbReference>
<dbReference type="RefSeq" id="WP_012433448.1">
    <property type="nucleotide sequence ID" value="NC_010681.1"/>
</dbReference>
<dbReference type="SMR" id="B2T5J4"/>
<dbReference type="STRING" id="398527.Bphyt_2455"/>
<dbReference type="GeneID" id="97307446"/>
<dbReference type="KEGG" id="bpy:Bphyt_2455"/>
<dbReference type="eggNOG" id="COG0052">
    <property type="taxonomic scope" value="Bacteria"/>
</dbReference>
<dbReference type="HOGENOM" id="CLU_040318_1_2_4"/>
<dbReference type="OrthoDB" id="9808036at2"/>
<dbReference type="Proteomes" id="UP000001739">
    <property type="component" value="Chromosome 1"/>
</dbReference>
<dbReference type="GO" id="GO:0022627">
    <property type="term" value="C:cytosolic small ribosomal subunit"/>
    <property type="evidence" value="ECO:0007669"/>
    <property type="project" value="TreeGrafter"/>
</dbReference>
<dbReference type="GO" id="GO:0003735">
    <property type="term" value="F:structural constituent of ribosome"/>
    <property type="evidence" value="ECO:0007669"/>
    <property type="project" value="InterPro"/>
</dbReference>
<dbReference type="GO" id="GO:0006412">
    <property type="term" value="P:translation"/>
    <property type="evidence" value="ECO:0007669"/>
    <property type="project" value="UniProtKB-UniRule"/>
</dbReference>
<dbReference type="CDD" id="cd01425">
    <property type="entry name" value="RPS2"/>
    <property type="match status" value="1"/>
</dbReference>
<dbReference type="FunFam" id="1.10.287.610:FF:000001">
    <property type="entry name" value="30S ribosomal protein S2"/>
    <property type="match status" value="1"/>
</dbReference>
<dbReference type="Gene3D" id="3.40.50.10490">
    <property type="entry name" value="Glucose-6-phosphate isomerase like protein, domain 1"/>
    <property type="match status" value="1"/>
</dbReference>
<dbReference type="Gene3D" id="1.10.287.610">
    <property type="entry name" value="Helix hairpin bin"/>
    <property type="match status" value="1"/>
</dbReference>
<dbReference type="HAMAP" id="MF_00291_B">
    <property type="entry name" value="Ribosomal_uS2_B"/>
    <property type="match status" value="1"/>
</dbReference>
<dbReference type="InterPro" id="IPR001865">
    <property type="entry name" value="Ribosomal_uS2"/>
</dbReference>
<dbReference type="InterPro" id="IPR005706">
    <property type="entry name" value="Ribosomal_uS2_bac/mit/plastid"/>
</dbReference>
<dbReference type="InterPro" id="IPR018130">
    <property type="entry name" value="Ribosomal_uS2_CS"/>
</dbReference>
<dbReference type="InterPro" id="IPR023591">
    <property type="entry name" value="Ribosomal_uS2_flav_dom_sf"/>
</dbReference>
<dbReference type="NCBIfam" id="TIGR01011">
    <property type="entry name" value="rpsB_bact"/>
    <property type="match status" value="1"/>
</dbReference>
<dbReference type="PANTHER" id="PTHR12534">
    <property type="entry name" value="30S RIBOSOMAL PROTEIN S2 PROKARYOTIC AND ORGANELLAR"/>
    <property type="match status" value="1"/>
</dbReference>
<dbReference type="PANTHER" id="PTHR12534:SF0">
    <property type="entry name" value="SMALL RIBOSOMAL SUBUNIT PROTEIN US2M"/>
    <property type="match status" value="1"/>
</dbReference>
<dbReference type="Pfam" id="PF00318">
    <property type="entry name" value="Ribosomal_S2"/>
    <property type="match status" value="1"/>
</dbReference>
<dbReference type="PRINTS" id="PR00395">
    <property type="entry name" value="RIBOSOMALS2"/>
</dbReference>
<dbReference type="SUPFAM" id="SSF52313">
    <property type="entry name" value="Ribosomal protein S2"/>
    <property type="match status" value="1"/>
</dbReference>
<dbReference type="PROSITE" id="PS00962">
    <property type="entry name" value="RIBOSOMAL_S2_1"/>
    <property type="match status" value="1"/>
</dbReference>
<feature type="chain" id="PRO_1000115001" description="Small ribosomal subunit protein uS2">
    <location>
        <begin position="1"/>
        <end position="250"/>
    </location>
</feature>
<name>RS2_PARPJ</name>
<accession>B2T5J4</accession>
<keyword id="KW-0687">Ribonucleoprotein</keyword>
<keyword id="KW-0689">Ribosomal protein</keyword>
<organism>
    <name type="scientific">Paraburkholderia phytofirmans (strain DSM 17436 / LMG 22146 / PsJN)</name>
    <name type="common">Burkholderia phytofirmans</name>
    <dbReference type="NCBI Taxonomy" id="398527"/>
    <lineage>
        <taxon>Bacteria</taxon>
        <taxon>Pseudomonadati</taxon>
        <taxon>Pseudomonadota</taxon>
        <taxon>Betaproteobacteria</taxon>
        <taxon>Burkholderiales</taxon>
        <taxon>Burkholderiaceae</taxon>
        <taxon>Paraburkholderia</taxon>
    </lineage>
</organism>
<evidence type="ECO:0000255" key="1">
    <source>
        <dbReference type="HAMAP-Rule" id="MF_00291"/>
    </source>
</evidence>
<evidence type="ECO:0000305" key="2"/>
<gene>
    <name evidence="1" type="primary">rpsB</name>
    <name type="ordered locus">Bphyt_2455</name>
</gene>
<sequence length="250" mass="27341">MAVTMRQMLEAGVHFGHQTRFWNPKMAPFIFGHRNKIHIINLEKTLPMYNDALKYARQLAANRGTILFVGTKRQSRDTIAEEAQRAGMPFVNARWLGGMLTNFKTLKVSIKRLKDMEAALEAGETERMSKKEALLFEREMAKLVKSIGGVKDMGGIPDAIFVVDVGYHKIAVTEANKLGIPVIAVVDTNHSPEGIDYVIPGNDDASKAVALYTAGVADAIVEGRANAVNEVVQAARGGDGDEFVEVNSEA</sequence>
<protein>
    <recommendedName>
        <fullName evidence="1">Small ribosomal subunit protein uS2</fullName>
    </recommendedName>
    <alternativeName>
        <fullName evidence="2">30S ribosomal protein S2</fullName>
    </alternativeName>
</protein>
<comment type="similarity">
    <text evidence="1">Belongs to the universal ribosomal protein uS2 family.</text>
</comment>
<proteinExistence type="inferred from homology"/>